<feature type="chain" id="PRO_0000155790" description="Quinolinate synthase">
    <location>
        <begin position="1"/>
        <end position="352"/>
    </location>
</feature>
<feature type="binding site" evidence="1">
    <location>
        <position position="55"/>
    </location>
    <ligand>
        <name>iminosuccinate</name>
        <dbReference type="ChEBI" id="CHEBI:77875"/>
    </ligand>
</feature>
<feature type="binding site" evidence="1">
    <location>
        <position position="72"/>
    </location>
    <ligand>
        <name>iminosuccinate</name>
        <dbReference type="ChEBI" id="CHEBI:77875"/>
    </ligand>
</feature>
<feature type="binding site" evidence="1">
    <location>
        <position position="117"/>
    </location>
    <ligand>
        <name>[4Fe-4S] cluster</name>
        <dbReference type="ChEBI" id="CHEBI:49883"/>
    </ligand>
</feature>
<feature type="binding site" evidence="1">
    <location>
        <begin position="143"/>
        <end position="145"/>
    </location>
    <ligand>
        <name>iminosuccinate</name>
        <dbReference type="ChEBI" id="CHEBI:77875"/>
    </ligand>
</feature>
<feature type="binding site" evidence="1">
    <location>
        <position position="160"/>
    </location>
    <ligand>
        <name>iminosuccinate</name>
        <dbReference type="ChEBI" id="CHEBI:77875"/>
    </ligand>
</feature>
<feature type="binding site" evidence="1">
    <location>
        <position position="204"/>
    </location>
    <ligand>
        <name>[4Fe-4S] cluster</name>
        <dbReference type="ChEBI" id="CHEBI:49883"/>
    </ligand>
</feature>
<feature type="binding site" evidence="1">
    <location>
        <begin position="230"/>
        <end position="232"/>
    </location>
    <ligand>
        <name>iminosuccinate</name>
        <dbReference type="ChEBI" id="CHEBI:77875"/>
    </ligand>
</feature>
<feature type="binding site" evidence="1">
    <location>
        <position position="258"/>
    </location>
    <ligand>
        <name>iminosuccinate</name>
        <dbReference type="ChEBI" id="CHEBI:77875"/>
    </ligand>
</feature>
<feature type="binding site" evidence="1">
    <location>
        <position position="303"/>
    </location>
    <ligand>
        <name>[4Fe-4S] cluster</name>
        <dbReference type="ChEBI" id="CHEBI:49883"/>
    </ligand>
</feature>
<reference key="1">
    <citation type="submission" date="1994-03" db="EMBL/GenBank/DDBJ databases">
        <authorList>
            <person name="Robison K."/>
            <person name="Smith D.R."/>
        </authorList>
    </citation>
    <scope>NUCLEOTIDE SEQUENCE [GENOMIC DNA]</scope>
</reference>
<reference key="2">
    <citation type="journal article" date="2001" name="Nature">
        <title>Massive gene decay in the leprosy bacillus.</title>
        <authorList>
            <person name="Cole S.T."/>
            <person name="Eiglmeier K."/>
            <person name="Parkhill J."/>
            <person name="James K.D."/>
            <person name="Thomson N.R."/>
            <person name="Wheeler P.R."/>
            <person name="Honore N."/>
            <person name="Garnier T."/>
            <person name="Churcher C.M."/>
            <person name="Harris D.E."/>
            <person name="Mungall K.L."/>
            <person name="Basham D."/>
            <person name="Brown D."/>
            <person name="Chillingworth T."/>
            <person name="Connor R."/>
            <person name="Davies R.M."/>
            <person name="Devlin K."/>
            <person name="Duthoy S."/>
            <person name="Feltwell T."/>
            <person name="Fraser A."/>
            <person name="Hamlin N."/>
            <person name="Holroyd S."/>
            <person name="Hornsby T."/>
            <person name="Jagels K."/>
            <person name="Lacroix C."/>
            <person name="Maclean J."/>
            <person name="Moule S."/>
            <person name="Murphy L.D."/>
            <person name="Oliver K."/>
            <person name="Quail M.A."/>
            <person name="Rajandream M.A."/>
            <person name="Rutherford K.M."/>
            <person name="Rutter S."/>
            <person name="Seeger K."/>
            <person name="Simon S."/>
            <person name="Simmonds M."/>
            <person name="Skelton J."/>
            <person name="Squares R."/>
            <person name="Squares S."/>
            <person name="Stevens K."/>
            <person name="Taylor K."/>
            <person name="Whitehead S."/>
            <person name="Woodward J.R."/>
            <person name="Barrell B.G."/>
        </authorList>
    </citation>
    <scope>NUCLEOTIDE SEQUENCE [LARGE SCALE GENOMIC DNA]</scope>
    <source>
        <strain>TN</strain>
    </source>
</reference>
<gene>
    <name evidence="1" type="primary">nadA</name>
    <name type="ordered locus">ML1225</name>
    <name type="ORF">B1170_C2_201</name>
</gene>
<protein>
    <recommendedName>
        <fullName evidence="1">Quinolinate synthase</fullName>
        <ecNumber evidence="1">2.5.1.72</ecNumber>
    </recommendedName>
</protein>
<evidence type="ECO:0000255" key="1">
    <source>
        <dbReference type="HAMAP-Rule" id="MF_00568"/>
    </source>
</evidence>
<evidence type="ECO:0000305" key="2"/>
<organism>
    <name type="scientific">Mycobacterium leprae (strain TN)</name>
    <dbReference type="NCBI Taxonomy" id="272631"/>
    <lineage>
        <taxon>Bacteria</taxon>
        <taxon>Bacillati</taxon>
        <taxon>Actinomycetota</taxon>
        <taxon>Actinomycetes</taxon>
        <taxon>Mycobacteriales</taxon>
        <taxon>Mycobacteriaceae</taxon>
        <taxon>Mycobacterium</taxon>
    </lineage>
</organism>
<accession>Q49622</accession>
<accession>Q9CC65</accession>
<sequence>MTVLNGMEPLAGDMTVVIAGITDSPVGYAGVDGDEQWATEIRRLTRLRGATVLAHNYQLPAIQDIADYVGDSLALSRIAAEVPEETIVFCGVHFMAETAKILSPNKTVLIPDQRAGCSLADSITPDELCAWKDEHPGAAVVSYVNTTAEVKALTDICCTSSNAVDVVESIDPSREVLFCPDQFLGAHVRRVTGRKNVYVWMGECHVHAGINGDELVDQARANPDAELFVHPECGCSTSALYLAGEGAFPPDRVKILSTGGMLTAARQTQYRKILVATEVGMLYQLRRAAPEIDFRAVNDRASCKYMKMITPGALLRCLVEGTDEVHVDSEIAAAGRRSVQRMIEIGLPGGGE</sequence>
<dbReference type="EC" id="2.5.1.72" evidence="1"/>
<dbReference type="EMBL" id="U00010">
    <property type="protein sequence ID" value="AAA17067.1"/>
    <property type="status" value="ALT_INIT"/>
    <property type="molecule type" value="Genomic_DNA"/>
</dbReference>
<dbReference type="EMBL" id="AL583921">
    <property type="protein sequence ID" value="CAC31606.1"/>
    <property type="molecule type" value="Genomic_DNA"/>
</dbReference>
<dbReference type="PIR" id="C87062">
    <property type="entry name" value="C87062"/>
</dbReference>
<dbReference type="PIR" id="S72703">
    <property type="entry name" value="S72703"/>
</dbReference>
<dbReference type="RefSeq" id="NP_301887.1">
    <property type="nucleotide sequence ID" value="NC_002677.1"/>
</dbReference>
<dbReference type="RefSeq" id="WP_010908208.1">
    <property type="nucleotide sequence ID" value="NC_002677.1"/>
</dbReference>
<dbReference type="SMR" id="Q49622"/>
<dbReference type="STRING" id="272631.gene:17575056"/>
<dbReference type="KEGG" id="mle:ML1225"/>
<dbReference type="PATRIC" id="fig|272631.5.peg.2248"/>
<dbReference type="Leproma" id="ML1225"/>
<dbReference type="eggNOG" id="COG0379">
    <property type="taxonomic scope" value="Bacteria"/>
</dbReference>
<dbReference type="HOGENOM" id="CLU_047382_0_0_11"/>
<dbReference type="OrthoDB" id="9801204at2"/>
<dbReference type="UniPathway" id="UPA00253">
    <property type="reaction ID" value="UER00327"/>
</dbReference>
<dbReference type="Proteomes" id="UP000000806">
    <property type="component" value="Chromosome"/>
</dbReference>
<dbReference type="GO" id="GO:0005829">
    <property type="term" value="C:cytosol"/>
    <property type="evidence" value="ECO:0007669"/>
    <property type="project" value="TreeGrafter"/>
</dbReference>
<dbReference type="GO" id="GO:0051539">
    <property type="term" value="F:4 iron, 4 sulfur cluster binding"/>
    <property type="evidence" value="ECO:0007669"/>
    <property type="project" value="UniProtKB-KW"/>
</dbReference>
<dbReference type="GO" id="GO:0046872">
    <property type="term" value="F:metal ion binding"/>
    <property type="evidence" value="ECO:0007669"/>
    <property type="project" value="UniProtKB-KW"/>
</dbReference>
<dbReference type="GO" id="GO:0008987">
    <property type="term" value="F:quinolinate synthetase A activity"/>
    <property type="evidence" value="ECO:0007669"/>
    <property type="project" value="UniProtKB-UniRule"/>
</dbReference>
<dbReference type="GO" id="GO:0034628">
    <property type="term" value="P:'de novo' NAD biosynthetic process from L-aspartate"/>
    <property type="evidence" value="ECO:0007669"/>
    <property type="project" value="TreeGrafter"/>
</dbReference>
<dbReference type="FunFam" id="3.40.50.10800:FF:000007">
    <property type="entry name" value="Quinolinate synthase A"/>
    <property type="match status" value="1"/>
</dbReference>
<dbReference type="Gene3D" id="3.40.50.10800">
    <property type="entry name" value="NadA-like"/>
    <property type="match status" value="3"/>
</dbReference>
<dbReference type="HAMAP" id="MF_00568">
    <property type="entry name" value="NadA_type2"/>
    <property type="match status" value="1"/>
</dbReference>
<dbReference type="InterPro" id="IPR003473">
    <property type="entry name" value="NadA"/>
</dbReference>
<dbReference type="InterPro" id="IPR036094">
    <property type="entry name" value="NadA_sf"/>
</dbReference>
<dbReference type="InterPro" id="IPR023066">
    <property type="entry name" value="Quinolinate_synth_type2"/>
</dbReference>
<dbReference type="NCBIfam" id="TIGR00550">
    <property type="entry name" value="nadA"/>
    <property type="match status" value="1"/>
</dbReference>
<dbReference type="NCBIfam" id="NF006878">
    <property type="entry name" value="PRK09375.1-2"/>
    <property type="match status" value="1"/>
</dbReference>
<dbReference type="NCBIfam" id="NF006879">
    <property type="entry name" value="PRK09375.1-4"/>
    <property type="match status" value="1"/>
</dbReference>
<dbReference type="PANTHER" id="PTHR30573:SF0">
    <property type="entry name" value="QUINOLINATE SYNTHASE, CHLOROPLASTIC"/>
    <property type="match status" value="1"/>
</dbReference>
<dbReference type="PANTHER" id="PTHR30573">
    <property type="entry name" value="QUINOLINATE SYNTHETASE A"/>
    <property type="match status" value="1"/>
</dbReference>
<dbReference type="Pfam" id="PF02445">
    <property type="entry name" value="NadA"/>
    <property type="match status" value="1"/>
</dbReference>
<dbReference type="SUPFAM" id="SSF142754">
    <property type="entry name" value="NadA-like"/>
    <property type="match status" value="1"/>
</dbReference>
<keyword id="KW-0004">4Fe-4S</keyword>
<keyword id="KW-0963">Cytoplasm</keyword>
<keyword id="KW-0408">Iron</keyword>
<keyword id="KW-0411">Iron-sulfur</keyword>
<keyword id="KW-0479">Metal-binding</keyword>
<keyword id="KW-0662">Pyridine nucleotide biosynthesis</keyword>
<keyword id="KW-1185">Reference proteome</keyword>
<keyword id="KW-0808">Transferase</keyword>
<proteinExistence type="inferred from homology"/>
<name>NADA_MYCLE</name>
<comment type="function">
    <text evidence="1">Catalyzes the condensation of iminoaspartate with dihydroxyacetone phosphate to form quinolinate.</text>
</comment>
<comment type="catalytic activity">
    <reaction evidence="1">
        <text>iminosuccinate + dihydroxyacetone phosphate = quinolinate + phosphate + 2 H2O + H(+)</text>
        <dbReference type="Rhea" id="RHEA:25888"/>
        <dbReference type="ChEBI" id="CHEBI:15377"/>
        <dbReference type="ChEBI" id="CHEBI:15378"/>
        <dbReference type="ChEBI" id="CHEBI:29959"/>
        <dbReference type="ChEBI" id="CHEBI:43474"/>
        <dbReference type="ChEBI" id="CHEBI:57642"/>
        <dbReference type="ChEBI" id="CHEBI:77875"/>
        <dbReference type="EC" id="2.5.1.72"/>
    </reaction>
    <physiologicalReaction direction="left-to-right" evidence="1">
        <dbReference type="Rhea" id="RHEA:25889"/>
    </physiologicalReaction>
</comment>
<comment type="cofactor">
    <cofactor evidence="1">
        <name>[4Fe-4S] cluster</name>
        <dbReference type="ChEBI" id="CHEBI:49883"/>
    </cofactor>
    <text evidence="1">Binds 1 [4Fe-4S] cluster per subunit.</text>
</comment>
<comment type="pathway">
    <text evidence="1">Cofactor biosynthesis; NAD(+) biosynthesis; quinolinate from iminoaspartate: step 1/1.</text>
</comment>
<comment type="subcellular location">
    <subcellularLocation>
        <location evidence="1">Cytoplasm</location>
    </subcellularLocation>
</comment>
<comment type="similarity">
    <text evidence="1">Belongs to the quinolinate synthase family. Type 2 subfamily.</text>
</comment>
<comment type="sequence caution" evidence="2">
    <conflict type="erroneous initiation">
        <sequence resource="EMBL-CDS" id="AAA17067"/>
    </conflict>
</comment>